<proteinExistence type="inferred from homology"/>
<name>ARNE_SERP5</name>
<reference key="1">
    <citation type="submission" date="2007-09" db="EMBL/GenBank/DDBJ databases">
        <title>Complete sequence of chromosome of Serratia proteamaculans 568.</title>
        <authorList>
            <consortium name="US DOE Joint Genome Institute"/>
            <person name="Copeland A."/>
            <person name="Lucas S."/>
            <person name="Lapidus A."/>
            <person name="Barry K."/>
            <person name="Glavina del Rio T."/>
            <person name="Dalin E."/>
            <person name="Tice H."/>
            <person name="Pitluck S."/>
            <person name="Chain P."/>
            <person name="Malfatti S."/>
            <person name="Shin M."/>
            <person name="Vergez L."/>
            <person name="Schmutz J."/>
            <person name="Larimer F."/>
            <person name="Land M."/>
            <person name="Hauser L."/>
            <person name="Kyrpides N."/>
            <person name="Kim E."/>
            <person name="Taghavi S."/>
            <person name="Newman L."/>
            <person name="Vangronsveld J."/>
            <person name="van der Lelie D."/>
            <person name="Richardson P."/>
        </authorList>
    </citation>
    <scope>NUCLEOTIDE SEQUENCE [LARGE SCALE GENOMIC DNA]</scope>
    <source>
        <strain>568</strain>
    </source>
</reference>
<gene>
    <name evidence="1" type="primary">arnE</name>
    <name type="ordered locus">Spro_2159</name>
</gene>
<protein>
    <recommendedName>
        <fullName evidence="1">Probable 4-amino-4-deoxy-L-arabinose-phosphoundecaprenol flippase subunit ArnE</fullName>
        <shortName evidence="1">L-Ara4N-phosphoundecaprenol flippase subunit ArnE</shortName>
    </recommendedName>
    <alternativeName>
        <fullName evidence="1">Undecaprenyl phosphate-aminoarabinose flippase subunit ArnE</fullName>
    </alternativeName>
</protein>
<keyword id="KW-0997">Cell inner membrane</keyword>
<keyword id="KW-1003">Cell membrane</keyword>
<keyword id="KW-0441">Lipid A biosynthesis</keyword>
<keyword id="KW-0444">Lipid biosynthesis</keyword>
<keyword id="KW-0443">Lipid metabolism</keyword>
<keyword id="KW-0448">Lipopolysaccharide biosynthesis</keyword>
<keyword id="KW-0472">Membrane</keyword>
<keyword id="KW-0812">Transmembrane</keyword>
<keyword id="KW-1133">Transmembrane helix</keyword>
<keyword id="KW-0813">Transport</keyword>
<sequence>MIVGYLLVVLVSLLTCGGQLCQKQAALSWQLPPEVRRGVTLRWLALAVLLLGLGMAVWLNVLQRLPLSLAYPTLSLNFVLVTLAARWLFNEPTTARHWYGVASIMLGILLMSINP</sequence>
<feature type="chain" id="PRO_0000383002" description="Probable 4-amino-4-deoxy-L-arabinose-phosphoundecaprenol flippase subunit ArnE">
    <location>
        <begin position="1"/>
        <end position="115"/>
    </location>
</feature>
<feature type="transmembrane region" description="Helical" evidence="1">
    <location>
        <begin position="1"/>
        <end position="21"/>
    </location>
</feature>
<feature type="transmembrane region" description="Helical" evidence="1">
    <location>
        <begin position="43"/>
        <end position="63"/>
    </location>
</feature>
<feature type="transmembrane region" description="Helical" evidence="1">
    <location>
        <begin position="65"/>
        <end position="85"/>
    </location>
</feature>
<feature type="transmembrane region" description="Helical" evidence="1">
    <location>
        <begin position="93"/>
        <end position="113"/>
    </location>
</feature>
<feature type="domain" description="EamA" evidence="1">
    <location>
        <begin position="44"/>
        <end position="113"/>
    </location>
</feature>
<evidence type="ECO:0000255" key="1">
    <source>
        <dbReference type="HAMAP-Rule" id="MF_01869"/>
    </source>
</evidence>
<organism>
    <name type="scientific">Serratia proteamaculans (strain 568)</name>
    <dbReference type="NCBI Taxonomy" id="399741"/>
    <lineage>
        <taxon>Bacteria</taxon>
        <taxon>Pseudomonadati</taxon>
        <taxon>Pseudomonadota</taxon>
        <taxon>Gammaproteobacteria</taxon>
        <taxon>Enterobacterales</taxon>
        <taxon>Yersiniaceae</taxon>
        <taxon>Serratia</taxon>
    </lineage>
</organism>
<accession>A8GDS0</accession>
<dbReference type="EMBL" id="CP000826">
    <property type="protein sequence ID" value="ABV41260.1"/>
    <property type="molecule type" value="Genomic_DNA"/>
</dbReference>
<dbReference type="STRING" id="399741.Spro_2159"/>
<dbReference type="KEGG" id="spe:Spro_2159"/>
<dbReference type="eggNOG" id="COG2076">
    <property type="taxonomic scope" value="Bacteria"/>
</dbReference>
<dbReference type="HOGENOM" id="CLU_131462_5_1_6"/>
<dbReference type="OrthoDB" id="6058674at2"/>
<dbReference type="UniPathway" id="UPA00030"/>
<dbReference type="GO" id="GO:0005886">
    <property type="term" value="C:plasma membrane"/>
    <property type="evidence" value="ECO:0007669"/>
    <property type="project" value="UniProtKB-SubCell"/>
</dbReference>
<dbReference type="GO" id="GO:1901505">
    <property type="term" value="F:carbohydrate derivative transmembrane transporter activity"/>
    <property type="evidence" value="ECO:0007669"/>
    <property type="project" value="InterPro"/>
</dbReference>
<dbReference type="GO" id="GO:0009245">
    <property type="term" value="P:lipid A biosynthetic process"/>
    <property type="evidence" value="ECO:0007669"/>
    <property type="project" value="UniProtKB-UniRule"/>
</dbReference>
<dbReference type="GO" id="GO:0009103">
    <property type="term" value="P:lipopolysaccharide biosynthetic process"/>
    <property type="evidence" value="ECO:0007669"/>
    <property type="project" value="UniProtKB-UniRule"/>
</dbReference>
<dbReference type="FunFam" id="1.10.3730.20:FF:000002">
    <property type="entry name" value="Probable 4-amino-4-deoxy-L-arabinose-phosphoundecaprenol flippase subunit ArnE"/>
    <property type="match status" value="1"/>
</dbReference>
<dbReference type="Gene3D" id="1.10.3730.20">
    <property type="match status" value="1"/>
</dbReference>
<dbReference type="HAMAP" id="MF_01869">
    <property type="entry name" value="Flippase_ArnE"/>
    <property type="match status" value="1"/>
</dbReference>
<dbReference type="InterPro" id="IPR000620">
    <property type="entry name" value="EamA_dom"/>
</dbReference>
<dbReference type="InterPro" id="IPR022883">
    <property type="entry name" value="Flippase_ArnE"/>
</dbReference>
<dbReference type="InterPro" id="IPR000390">
    <property type="entry name" value="Small_drug/metabolite_transptr"/>
</dbReference>
<dbReference type="NCBIfam" id="NF011625">
    <property type="entry name" value="PRK15051.1"/>
    <property type="match status" value="1"/>
</dbReference>
<dbReference type="PANTHER" id="PTHR30561:SF23">
    <property type="entry name" value="4-AMINO-4-DEOXY-L-ARABINOSE-PHOSPHOUNDECAPRENOL FLIPPASE SUBUNIT ARNE-RELATED"/>
    <property type="match status" value="1"/>
</dbReference>
<dbReference type="PANTHER" id="PTHR30561">
    <property type="entry name" value="SMR FAMILY PROTON-DEPENDENT DRUG EFFLUX TRANSPORTER SUGE"/>
    <property type="match status" value="1"/>
</dbReference>
<dbReference type="Pfam" id="PF00892">
    <property type="entry name" value="EamA"/>
    <property type="match status" value="1"/>
</dbReference>
<dbReference type="SUPFAM" id="SSF103481">
    <property type="entry name" value="Multidrug resistance efflux transporter EmrE"/>
    <property type="match status" value="1"/>
</dbReference>
<comment type="function">
    <text evidence="1">Translocates 4-amino-4-deoxy-L-arabinose-phosphoundecaprenol (alpha-L-Ara4N-phosphoundecaprenol) from the cytoplasmic to the periplasmic side of the inner membrane.</text>
</comment>
<comment type="pathway">
    <text evidence="1">Bacterial outer membrane biogenesis; lipopolysaccharide biosynthesis.</text>
</comment>
<comment type="subunit">
    <text evidence="1">Heterodimer of ArnE and ArnF.</text>
</comment>
<comment type="subcellular location">
    <subcellularLocation>
        <location evidence="1">Cell inner membrane</location>
        <topology evidence="1">Multi-pass membrane protein</topology>
    </subcellularLocation>
</comment>
<comment type="similarity">
    <text evidence="1">Belongs to the ArnE family.</text>
</comment>